<gene>
    <name evidence="1" type="primary">psbN</name>
    <name type="ordered locus">P9301_02761</name>
</gene>
<dbReference type="EMBL" id="CP000576">
    <property type="protein sequence ID" value="ABO16899.1"/>
    <property type="molecule type" value="Genomic_DNA"/>
</dbReference>
<dbReference type="RefSeq" id="WP_011817745.1">
    <property type="nucleotide sequence ID" value="NC_009091.1"/>
</dbReference>
<dbReference type="SMR" id="A3PAX4"/>
<dbReference type="STRING" id="167546.P9301_02761"/>
<dbReference type="KEGG" id="pmg:P9301_02761"/>
<dbReference type="HOGENOM" id="CLU_205504_1_0_3"/>
<dbReference type="Proteomes" id="UP000001430">
    <property type="component" value="Chromosome"/>
</dbReference>
<dbReference type="GO" id="GO:0031676">
    <property type="term" value="C:plasma membrane-derived thylakoid membrane"/>
    <property type="evidence" value="ECO:0007669"/>
    <property type="project" value="UniProtKB-SubCell"/>
</dbReference>
<dbReference type="GO" id="GO:0015979">
    <property type="term" value="P:photosynthesis"/>
    <property type="evidence" value="ECO:0007669"/>
    <property type="project" value="InterPro"/>
</dbReference>
<dbReference type="HAMAP" id="MF_00293">
    <property type="entry name" value="PSII_PsbN"/>
    <property type="match status" value="1"/>
</dbReference>
<dbReference type="InterPro" id="IPR003398">
    <property type="entry name" value="PSII_PsbN"/>
</dbReference>
<dbReference type="NCBIfam" id="NF009650">
    <property type="entry name" value="PRK13183.1"/>
    <property type="match status" value="1"/>
</dbReference>
<dbReference type="Pfam" id="PF02468">
    <property type="entry name" value="PsbN"/>
    <property type="match status" value="1"/>
</dbReference>
<accession>A3PAX4</accession>
<name>PSBN_PROM0</name>
<proteinExistence type="inferred from homology"/>
<reference key="1">
    <citation type="journal article" date="2007" name="PLoS Genet.">
        <title>Patterns and implications of gene gain and loss in the evolution of Prochlorococcus.</title>
        <authorList>
            <person name="Kettler G.C."/>
            <person name="Martiny A.C."/>
            <person name="Huang K."/>
            <person name="Zucker J."/>
            <person name="Coleman M.L."/>
            <person name="Rodrigue S."/>
            <person name="Chen F."/>
            <person name="Lapidus A."/>
            <person name="Ferriera S."/>
            <person name="Johnson J."/>
            <person name="Steglich C."/>
            <person name="Church G.M."/>
            <person name="Richardson P."/>
            <person name="Chisholm S.W."/>
        </authorList>
    </citation>
    <scope>NUCLEOTIDE SEQUENCE [LARGE SCALE GENOMIC DNA]</scope>
    <source>
        <strain>MIT 9301</strain>
    </source>
</reference>
<comment type="function">
    <text evidence="1">May play a role in photosystem I and II biogenesis.</text>
</comment>
<comment type="subcellular location">
    <subcellularLocation>
        <location evidence="1">Cellular thylakoid membrane</location>
        <topology evidence="1">Single-pass membrane protein</topology>
    </subcellularLocation>
</comment>
<comment type="similarity">
    <text evidence="1">Belongs to the PsbN family.</text>
</comment>
<comment type="caution">
    <text evidence="1">Originally thought to be a component of PSII; based on experiments in Synechocystis, N.tabacum and barley, and its absence from PSII in T.elongatus and T.vulcanus, this is probably not true.</text>
</comment>
<sequence length="50" mass="5253">MQTLSSAPDPAVSIAVTILALLLALTGFGLWTAFGPKAAKLTDPWDDHDD</sequence>
<keyword id="KW-0472">Membrane</keyword>
<keyword id="KW-1185">Reference proteome</keyword>
<keyword id="KW-0793">Thylakoid</keyword>
<keyword id="KW-0812">Transmembrane</keyword>
<keyword id="KW-1133">Transmembrane helix</keyword>
<organism>
    <name type="scientific">Prochlorococcus marinus (strain MIT 9301)</name>
    <dbReference type="NCBI Taxonomy" id="167546"/>
    <lineage>
        <taxon>Bacteria</taxon>
        <taxon>Bacillati</taxon>
        <taxon>Cyanobacteriota</taxon>
        <taxon>Cyanophyceae</taxon>
        <taxon>Synechococcales</taxon>
        <taxon>Prochlorococcaceae</taxon>
        <taxon>Prochlorococcus</taxon>
    </lineage>
</organism>
<feature type="chain" id="PRO_1000004126" description="Protein PsbN">
    <location>
        <begin position="1"/>
        <end position="50"/>
    </location>
</feature>
<feature type="transmembrane region" description="Helical" evidence="1">
    <location>
        <begin position="14"/>
        <end position="34"/>
    </location>
</feature>
<evidence type="ECO:0000255" key="1">
    <source>
        <dbReference type="HAMAP-Rule" id="MF_00293"/>
    </source>
</evidence>
<protein>
    <recommendedName>
        <fullName evidence="1">Protein PsbN</fullName>
    </recommendedName>
</protein>